<protein>
    <recommendedName>
        <fullName evidence="1">4-diphosphocytidyl-2-C-methyl-D-erythritol kinase</fullName>
        <shortName evidence="1">CMK</shortName>
        <ecNumber evidence="1">2.7.1.148</ecNumber>
    </recommendedName>
    <alternativeName>
        <fullName evidence="1">4-(cytidine-5'-diphospho)-2-C-methyl-D-erythritol kinase</fullName>
    </alternativeName>
</protein>
<name>ISPE_THEVB</name>
<feature type="chain" id="PRO_0000189274" description="4-diphosphocytidyl-2-C-methyl-D-erythritol kinase">
    <location>
        <begin position="1"/>
        <end position="311"/>
    </location>
</feature>
<feature type="active site" evidence="1">
    <location>
        <position position="9"/>
    </location>
</feature>
<feature type="active site" evidence="1">
    <location>
        <position position="137"/>
    </location>
</feature>
<feature type="binding site" evidence="1">
    <location>
        <begin position="95"/>
        <end position="105"/>
    </location>
    <ligand>
        <name>ATP</name>
        <dbReference type="ChEBI" id="CHEBI:30616"/>
    </ligand>
</feature>
<proteinExistence type="inferred from homology"/>
<organism>
    <name type="scientific">Thermosynechococcus vestitus (strain NIES-2133 / IAM M-273 / BP-1)</name>
    <dbReference type="NCBI Taxonomy" id="197221"/>
    <lineage>
        <taxon>Bacteria</taxon>
        <taxon>Bacillati</taxon>
        <taxon>Cyanobacteriota</taxon>
        <taxon>Cyanophyceae</taxon>
        <taxon>Acaryochloridales</taxon>
        <taxon>Thermosynechococcaceae</taxon>
        <taxon>Thermosynechococcus</taxon>
    </lineage>
</organism>
<gene>
    <name evidence="1" type="primary">ispE</name>
    <name type="ordered locus">tll0500</name>
</gene>
<dbReference type="EC" id="2.7.1.148" evidence="1"/>
<dbReference type="EMBL" id="BA000039">
    <property type="protein sequence ID" value="BAC08052.1"/>
    <property type="molecule type" value="Genomic_DNA"/>
</dbReference>
<dbReference type="RefSeq" id="NP_681290.1">
    <property type="nucleotide sequence ID" value="NC_004113.1"/>
</dbReference>
<dbReference type="RefSeq" id="WP_011056351.1">
    <property type="nucleotide sequence ID" value="NC_004113.1"/>
</dbReference>
<dbReference type="SMR" id="Q8DLJ1"/>
<dbReference type="STRING" id="197221.gene:10747089"/>
<dbReference type="EnsemblBacteria" id="BAC08052">
    <property type="protein sequence ID" value="BAC08052"/>
    <property type="gene ID" value="BAC08052"/>
</dbReference>
<dbReference type="KEGG" id="tel:tll0500"/>
<dbReference type="PATRIC" id="fig|197221.4.peg.526"/>
<dbReference type="eggNOG" id="COG1947">
    <property type="taxonomic scope" value="Bacteria"/>
</dbReference>
<dbReference type="UniPathway" id="UPA00056">
    <property type="reaction ID" value="UER00094"/>
</dbReference>
<dbReference type="Proteomes" id="UP000000440">
    <property type="component" value="Chromosome"/>
</dbReference>
<dbReference type="GO" id="GO:0050515">
    <property type="term" value="F:4-(cytidine 5'-diphospho)-2-C-methyl-D-erythritol kinase activity"/>
    <property type="evidence" value="ECO:0007669"/>
    <property type="project" value="UniProtKB-UniRule"/>
</dbReference>
<dbReference type="GO" id="GO:0005524">
    <property type="term" value="F:ATP binding"/>
    <property type="evidence" value="ECO:0007669"/>
    <property type="project" value="UniProtKB-UniRule"/>
</dbReference>
<dbReference type="GO" id="GO:0019288">
    <property type="term" value="P:isopentenyl diphosphate biosynthetic process, methylerythritol 4-phosphate pathway"/>
    <property type="evidence" value="ECO:0007669"/>
    <property type="project" value="UniProtKB-UniRule"/>
</dbReference>
<dbReference type="GO" id="GO:0016114">
    <property type="term" value="P:terpenoid biosynthetic process"/>
    <property type="evidence" value="ECO:0007669"/>
    <property type="project" value="InterPro"/>
</dbReference>
<dbReference type="Gene3D" id="3.30.230.10">
    <property type="match status" value="1"/>
</dbReference>
<dbReference type="Gene3D" id="3.30.70.890">
    <property type="entry name" value="GHMP kinase, C-terminal domain"/>
    <property type="match status" value="1"/>
</dbReference>
<dbReference type="HAMAP" id="MF_00061">
    <property type="entry name" value="IspE"/>
    <property type="match status" value="1"/>
</dbReference>
<dbReference type="InterPro" id="IPR013750">
    <property type="entry name" value="GHMP_kinase_C_dom"/>
</dbReference>
<dbReference type="InterPro" id="IPR036554">
    <property type="entry name" value="GHMP_kinase_C_sf"/>
</dbReference>
<dbReference type="InterPro" id="IPR006204">
    <property type="entry name" value="GHMP_kinase_N_dom"/>
</dbReference>
<dbReference type="InterPro" id="IPR004424">
    <property type="entry name" value="IspE"/>
</dbReference>
<dbReference type="InterPro" id="IPR020568">
    <property type="entry name" value="Ribosomal_Su5_D2-typ_SF"/>
</dbReference>
<dbReference type="InterPro" id="IPR014721">
    <property type="entry name" value="Ribsml_uS5_D2-typ_fold_subgr"/>
</dbReference>
<dbReference type="NCBIfam" id="TIGR00154">
    <property type="entry name" value="ispE"/>
    <property type="match status" value="1"/>
</dbReference>
<dbReference type="PANTHER" id="PTHR43527">
    <property type="entry name" value="4-DIPHOSPHOCYTIDYL-2-C-METHYL-D-ERYTHRITOL KINASE, CHLOROPLASTIC"/>
    <property type="match status" value="1"/>
</dbReference>
<dbReference type="PANTHER" id="PTHR43527:SF2">
    <property type="entry name" value="4-DIPHOSPHOCYTIDYL-2-C-METHYL-D-ERYTHRITOL KINASE, CHLOROPLASTIC"/>
    <property type="match status" value="1"/>
</dbReference>
<dbReference type="Pfam" id="PF08544">
    <property type="entry name" value="GHMP_kinases_C"/>
    <property type="match status" value="1"/>
</dbReference>
<dbReference type="Pfam" id="PF00288">
    <property type="entry name" value="GHMP_kinases_N"/>
    <property type="match status" value="1"/>
</dbReference>
<dbReference type="PIRSF" id="PIRSF010376">
    <property type="entry name" value="IspE"/>
    <property type="match status" value="1"/>
</dbReference>
<dbReference type="PRINTS" id="PR00958">
    <property type="entry name" value="HOMSERKINASE"/>
</dbReference>
<dbReference type="SUPFAM" id="SSF55060">
    <property type="entry name" value="GHMP Kinase, C-terminal domain"/>
    <property type="match status" value="1"/>
</dbReference>
<dbReference type="SUPFAM" id="SSF54211">
    <property type="entry name" value="Ribosomal protein S5 domain 2-like"/>
    <property type="match status" value="1"/>
</dbReference>
<keyword id="KW-0067">ATP-binding</keyword>
<keyword id="KW-0414">Isoprene biosynthesis</keyword>
<keyword id="KW-0418">Kinase</keyword>
<keyword id="KW-0547">Nucleotide-binding</keyword>
<keyword id="KW-1185">Reference proteome</keyword>
<keyword id="KW-0808">Transferase</keyword>
<accession>Q8DLJ1</accession>
<sequence length="311" mass="33799">MYRLLAPAKINLFLQIIGNCLDGSGYHELVMVMQAVSLMDRLELIPRRDREIKVHCTNPAVPCDQRNLAYKAAALLQQHFPDRDGVEIFIEKRIPLGAGLAGGSTNAAAVLVGLDLLWQLGLTQGELQTLAAQLGADVPFCLQGGTALALGRGEQLTPLADLQGLTVILGKYRSLSVATPWAYQTYRQEFAATYAQTPSEQEKARQEGGSAILLQAIQQHDIAPLAANLRNDLEKVVLPRYPLVAELKEQFLAAGAIASMMSGSGPTVFALAPSADEGYRIMQRVRRALPDPDLDLWVCECCPHGIQLETS</sequence>
<comment type="function">
    <text evidence="1">Catalyzes the phosphorylation of the position 2 hydroxy group of 4-diphosphocytidyl-2C-methyl-D-erythritol.</text>
</comment>
<comment type="catalytic activity">
    <reaction evidence="1">
        <text>4-CDP-2-C-methyl-D-erythritol + ATP = 4-CDP-2-C-methyl-D-erythritol 2-phosphate + ADP + H(+)</text>
        <dbReference type="Rhea" id="RHEA:18437"/>
        <dbReference type="ChEBI" id="CHEBI:15378"/>
        <dbReference type="ChEBI" id="CHEBI:30616"/>
        <dbReference type="ChEBI" id="CHEBI:57823"/>
        <dbReference type="ChEBI" id="CHEBI:57919"/>
        <dbReference type="ChEBI" id="CHEBI:456216"/>
        <dbReference type="EC" id="2.7.1.148"/>
    </reaction>
</comment>
<comment type="pathway">
    <text evidence="1">Isoprenoid biosynthesis; isopentenyl diphosphate biosynthesis via DXP pathway; isopentenyl diphosphate from 1-deoxy-D-xylulose 5-phosphate: step 3/6.</text>
</comment>
<comment type="similarity">
    <text evidence="1">Belongs to the GHMP kinase family. IspE subfamily.</text>
</comment>
<reference key="1">
    <citation type="journal article" date="2002" name="DNA Res.">
        <title>Complete genome structure of the thermophilic cyanobacterium Thermosynechococcus elongatus BP-1.</title>
        <authorList>
            <person name="Nakamura Y."/>
            <person name="Kaneko T."/>
            <person name="Sato S."/>
            <person name="Ikeuchi M."/>
            <person name="Katoh H."/>
            <person name="Sasamoto S."/>
            <person name="Watanabe A."/>
            <person name="Iriguchi M."/>
            <person name="Kawashima K."/>
            <person name="Kimura T."/>
            <person name="Kishida Y."/>
            <person name="Kiyokawa C."/>
            <person name="Kohara M."/>
            <person name="Matsumoto M."/>
            <person name="Matsuno A."/>
            <person name="Nakazaki N."/>
            <person name="Shimpo S."/>
            <person name="Sugimoto M."/>
            <person name="Takeuchi C."/>
            <person name="Yamada M."/>
            <person name="Tabata S."/>
        </authorList>
    </citation>
    <scope>NUCLEOTIDE SEQUENCE [LARGE SCALE GENOMIC DNA]</scope>
    <source>
        <strain>NIES-2133 / IAM M-273 / BP-1</strain>
    </source>
</reference>
<evidence type="ECO:0000255" key="1">
    <source>
        <dbReference type="HAMAP-Rule" id="MF_00061"/>
    </source>
</evidence>